<gene>
    <name evidence="1" type="primary">atpA</name>
    <name type="ordered locus">Sbal223_4312</name>
</gene>
<feature type="chain" id="PRO_1000166554" description="ATP synthase subunit alpha">
    <location>
        <begin position="1"/>
        <end position="513"/>
    </location>
</feature>
<feature type="binding site" evidence="1">
    <location>
        <begin position="169"/>
        <end position="176"/>
    </location>
    <ligand>
        <name>ATP</name>
        <dbReference type="ChEBI" id="CHEBI:30616"/>
    </ligand>
</feature>
<feature type="site" description="Required for activity" evidence="1">
    <location>
        <position position="373"/>
    </location>
</feature>
<accession>B8EDV2</accession>
<reference key="1">
    <citation type="submission" date="2008-12" db="EMBL/GenBank/DDBJ databases">
        <title>Complete sequence of chromosome of Shewanella baltica OS223.</title>
        <authorList>
            <consortium name="US DOE Joint Genome Institute"/>
            <person name="Lucas S."/>
            <person name="Copeland A."/>
            <person name="Lapidus A."/>
            <person name="Glavina del Rio T."/>
            <person name="Dalin E."/>
            <person name="Tice H."/>
            <person name="Bruce D."/>
            <person name="Goodwin L."/>
            <person name="Pitluck S."/>
            <person name="Chertkov O."/>
            <person name="Meincke L."/>
            <person name="Brettin T."/>
            <person name="Detter J.C."/>
            <person name="Han C."/>
            <person name="Kuske C.R."/>
            <person name="Larimer F."/>
            <person name="Land M."/>
            <person name="Hauser L."/>
            <person name="Kyrpides N."/>
            <person name="Ovchinnikova G."/>
            <person name="Brettar I."/>
            <person name="Rodrigues J."/>
            <person name="Konstantinidis K."/>
            <person name="Tiedje J."/>
        </authorList>
    </citation>
    <scope>NUCLEOTIDE SEQUENCE [LARGE SCALE GENOMIC DNA]</scope>
    <source>
        <strain>OS223</strain>
    </source>
</reference>
<name>ATPA_SHEB2</name>
<evidence type="ECO:0000255" key="1">
    <source>
        <dbReference type="HAMAP-Rule" id="MF_01346"/>
    </source>
</evidence>
<sequence length="513" mass="55192">MQLNSTEISDLIKQRIEQFEVVSESRNEGTIVAVSDGIIRIHGLADVMQGEMIELPGNRFAIALNLERDSVGAVVMGPYADLAEGVKVKTTGRILEVPVGRGLLGRVVNTLGEPIDGKGPIDNDGYSPIEVIAPGVIERQSVDQPVQTGYKAVDAMIPIGRGQRELIIGDRQTGKTAMAIDAIINQKNSGIKCVYVAIGQKASTIANVVRKLEEHGALANTIVVVATASEAAALQYLAPYSGCSMGEYFRDRGEDSLIVYDDLSKQAVAYRQISLLLKRPPGREAYPGDVFYLHSRLLERASRVNAIYVEKFTKGAVTGKTGSLTALPIIETQAGDVSAFVPTNVISITDGQIFLETDLFNSGLRPAVNPGISVSRVGGAAQTKIIKKLSGGIRTALAQYRELAAFSQFASDLDDATRAQLEHGVRVTELMKQKQYAPMSVAAQAVSIFSAEKGYLKSVELNKVGNFEAALLSFMNSEHAPLMKLINDTGDYSADIEAELKAGLDKFVATQTW</sequence>
<protein>
    <recommendedName>
        <fullName evidence="1">ATP synthase subunit alpha</fullName>
        <ecNumber evidence="1">7.1.2.2</ecNumber>
    </recommendedName>
    <alternativeName>
        <fullName evidence="1">ATP synthase F1 sector subunit alpha</fullName>
    </alternativeName>
    <alternativeName>
        <fullName evidence="1">F-ATPase subunit alpha</fullName>
    </alternativeName>
</protein>
<comment type="function">
    <text evidence="1">Produces ATP from ADP in the presence of a proton gradient across the membrane. The alpha chain is a regulatory subunit.</text>
</comment>
<comment type="catalytic activity">
    <reaction evidence="1">
        <text>ATP + H2O + 4 H(+)(in) = ADP + phosphate + 5 H(+)(out)</text>
        <dbReference type="Rhea" id="RHEA:57720"/>
        <dbReference type="ChEBI" id="CHEBI:15377"/>
        <dbReference type="ChEBI" id="CHEBI:15378"/>
        <dbReference type="ChEBI" id="CHEBI:30616"/>
        <dbReference type="ChEBI" id="CHEBI:43474"/>
        <dbReference type="ChEBI" id="CHEBI:456216"/>
        <dbReference type="EC" id="7.1.2.2"/>
    </reaction>
</comment>
<comment type="subunit">
    <text evidence="1">F-type ATPases have 2 components, CF(1) - the catalytic core - and CF(0) - the membrane proton channel. CF(1) has five subunits: alpha(3), beta(3), gamma(1), delta(1), epsilon(1). CF(0) has three main subunits: a(1), b(2) and c(9-12). The alpha and beta chains form an alternating ring which encloses part of the gamma chain. CF(1) is attached to CF(0) by a central stalk formed by the gamma and epsilon chains, while a peripheral stalk is formed by the delta and b chains.</text>
</comment>
<comment type="subcellular location">
    <subcellularLocation>
        <location evidence="1">Cell inner membrane</location>
        <topology evidence="1">Peripheral membrane protein</topology>
    </subcellularLocation>
</comment>
<comment type="similarity">
    <text evidence="1">Belongs to the ATPase alpha/beta chains family.</text>
</comment>
<dbReference type="EC" id="7.1.2.2" evidence="1"/>
<dbReference type="EMBL" id="CP001252">
    <property type="protein sequence ID" value="ACK48778.1"/>
    <property type="molecule type" value="Genomic_DNA"/>
</dbReference>
<dbReference type="RefSeq" id="WP_006083843.1">
    <property type="nucleotide sequence ID" value="NC_011663.1"/>
</dbReference>
<dbReference type="SMR" id="B8EDV2"/>
<dbReference type="GeneID" id="11774462"/>
<dbReference type="KEGG" id="sbp:Sbal223_4312"/>
<dbReference type="HOGENOM" id="CLU_010091_2_1_6"/>
<dbReference type="Proteomes" id="UP000002507">
    <property type="component" value="Chromosome"/>
</dbReference>
<dbReference type="GO" id="GO:0005886">
    <property type="term" value="C:plasma membrane"/>
    <property type="evidence" value="ECO:0007669"/>
    <property type="project" value="UniProtKB-SubCell"/>
</dbReference>
<dbReference type="GO" id="GO:0045259">
    <property type="term" value="C:proton-transporting ATP synthase complex"/>
    <property type="evidence" value="ECO:0007669"/>
    <property type="project" value="UniProtKB-KW"/>
</dbReference>
<dbReference type="GO" id="GO:0043531">
    <property type="term" value="F:ADP binding"/>
    <property type="evidence" value="ECO:0007669"/>
    <property type="project" value="TreeGrafter"/>
</dbReference>
<dbReference type="GO" id="GO:0005524">
    <property type="term" value="F:ATP binding"/>
    <property type="evidence" value="ECO:0007669"/>
    <property type="project" value="UniProtKB-UniRule"/>
</dbReference>
<dbReference type="GO" id="GO:0046933">
    <property type="term" value="F:proton-transporting ATP synthase activity, rotational mechanism"/>
    <property type="evidence" value="ECO:0007669"/>
    <property type="project" value="UniProtKB-UniRule"/>
</dbReference>
<dbReference type="CDD" id="cd18113">
    <property type="entry name" value="ATP-synt_F1_alpha_C"/>
    <property type="match status" value="1"/>
</dbReference>
<dbReference type="CDD" id="cd18116">
    <property type="entry name" value="ATP-synt_F1_alpha_N"/>
    <property type="match status" value="1"/>
</dbReference>
<dbReference type="CDD" id="cd01132">
    <property type="entry name" value="F1-ATPase_alpha_CD"/>
    <property type="match status" value="1"/>
</dbReference>
<dbReference type="FunFam" id="1.20.150.20:FF:000001">
    <property type="entry name" value="ATP synthase subunit alpha"/>
    <property type="match status" value="1"/>
</dbReference>
<dbReference type="FunFam" id="2.40.30.20:FF:000001">
    <property type="entry name" value="ATP synthase subunit alpha"/>
    <property type="match status" value="1"/>
</dbReference>
<dbReference type="FunFam" id="3.40.50.300:FF:000002">
    <property type="entry name" value="ATP synthase subunit alpha"/>
    <property type="match status" value="1"/>
</dbReference>
<dbReference type="Gene3D" id="2.40.30.20">
    <property type="match status" value="1"/>
</dbReference>
<dbReference type="Gene3D" id="1.20.150.20">
    <property type="entry name" value="ATP synthase alpha/beta chain, C-terminal domain"/>
    <property type="match status" value="1"/>
</dbReference>
<dbReference type="Gene3D" id="3.40.50.300">
    <property type="entry name" value="P-loop containing nucleotide triphosphate hydrolases"/>
    <property type="match status" value="1"/>
</dbReference>
<dbReference type="HAMAP" id="MF_01346">
    <property type="entry name" value="ATP_synth_alpha_bact"/>
    <property type="match status" value="1"/>
</dbReference>
<dbReference type="InterPro" id="IPR023366">
    <property type="entry name" value="ATP_synth_asu-like_sf"/>
</dbReference>
<dbReference type="InterPro" id="IPR000793">
    <property type="entry name" value="ATP_synth_asu_C"/>
</dbReference>
<dbReference type="InterPro" id="IPR038376">
    <property type="entry name" value="ATP_synth_asu_C_sf"/>
</dbReference>
<dbReference type="InterPro" id="IPR033732">
    <property type="entry name" value="ATP_synth_F1_a_nt-bd_dom"/>
</dbReference>
<dbReference type="InterPro" id="IPR005294">
    <property type="entry name" value="ATP_synth_F1_asu"/>
</dbReference>
<dbReference type="InterPro" id="IPR020003">
    <property type="entry name" value="ATPase_a/bsu_AS"/>
</dbReference>
<dbReference type="InterPro" id="IPR004100">
    <property type="entry name" value="ATPase_F1/V1/A1_a/bsu_N"/>
</dbReference>
<dbReference type="InterPro" id="IPR036121">
    <property type="entry name" value="ATPase_F1/V1/A1_a/bsu_N_sf"/>
</dbReference>
<dbReference type="InterPro" id="IPR000194">
    <property type="entry name" value="ATPase_F1/V1/A1_a/bsu_nucl-bd"/>
</dbReference>
<dbReference type="InterPro" id="IPR027417">
    <property type="entry name" value="P-loop_NTPase"/>
</dbReference>
<dbReference type="NCBIfam" id="TIGR00962">
    <property type="entry name" value="atpA"/>
    <property type="match status" value="1"/>
</dbReference>
<dbReference type="NCBIfam" id="NF009884">
    <property type="entry name" value="PRK13343.1"/>
    <property type="match status" value="1"/>
</dbReference>
<dbReference type="PANTHER" id="PTHR48082">
    <property type="entry name" value="ATP SYNTHASE SUBUNIT ALPHA, MITOCHONDRIAL"/>
    <property type="match status" value="1"/>
</dbReference>
<dbReference type="PANTHER" id="PTHR48082:SF2">
    <property type="entry name" value="ATP SYNTHASE SUBUNIT ALPHA, MITOCHONDRIAL"/>
    <property type="match status" value="1"/>
</dbReference>
<dbReference type="Pfam" id="PF00006">
    <property type="entry name" value="ATP-synt_ab"/>
    <property type="match status" value="1"/>
</dbReference>
<dbReference type="Pfam" id="PF00306">
    <property type="entry name" value="ATP-synt_ab_C"/>
    <property type="match status" value="1"/>
</dbReference>
<dbReference type="Pfam" id="PF02874">
    <property type="entry name" value="ATP-synt_ab_N"/>
    <property type="match status" value="1"/>
</dbReference>
<dbReference type="SUPFAM" id="SSF47917">
    <property type="entry name" value="C-terminal domain of alpha and beta subunits of F1 ATP synthase"/>
    <property type="match status" value="1"/>
</dbReference>
<dbReference type="SUPFAM" id="SSF50615">
    <property type="entry name" value="N-terminal domain of alpha and beta subunits of F1 ATP synthase"/>
    <property type="match status" value="1"/>
</dbReference>
<dbReference type="SUPFAM" id="SSF52540">
    <property type="entry name" value="P-loop containing nucleoside triphosphate hydrolases"/>
    <property type="match status" value="1"/>
</dbReference>
<dbReference type="PROSITE" id="PS00152">
    <property type="entry name" value="ATPASE_ALPHA_BETA"/>
    <property type="match status" value="1"/>
</dbReference>
<organism>
    <name type="scientific">Shewanella baltica (strain OS223)</name>
    <dbReference type="NCBI Taxonomy" id="407976"/>
    <lineage>
        <taxon>Bacteria</taxon>
        <taxon>Pseudomonadati</taxon>
        <taxon>Pseudomonadota</taxon>
        <taxon>Gammaproteobacteria</taxon>
        <taxon>Alteromonadales</taxon>
        <taxon>Shewanellaceae</taxon>
        <taxon>Shewanella</taxon>
    </lineage>
</organism>
<keyword id="KW-0066">ATP synthesis</keyword>
<keyword id="KW-0067">ATP-binding</keyword>
<keyword id="KW-0997">Cell inner membrane</keyword>
<keyword id="KW-1003">Cell membrane</keyword>
<keyword id="KW-0139">CF(1)</keyword>
<keyword id="KW-0375">Hydrogen ion transport</keyword>
<keyword id="KW-0406">Ion transport</keyword>
<keyword id="KW-0472">Membrane</keyword>
<keyword id="KW-0547">Nucleotide-binding</keyword>
<keyword id="KW-1278">Translocase</keyword>
<keyword id="KW-0813">Transport</keyword>
<proteinExistence type="inferred from homology"/>